<keyword id="KW-0027">Amidation</keyword>
<keyword id="KW-0903">Direct protein sequencing</keyword>
<keyword id="KW-0527">Neuropeptide</keyword>
<keyword id="KW-0964">Secreted</keyword>
<name>PVK22_CELBM</name>
<dbReference type="GO" id="GO:0005576">
    <property type="term" value="C:extracellular region"/>
    <property type="evidence" value="ECO:0007669"/>
    <property type="project" value="UniProtKB-SubCell"/>
</dbReference>
<dbReference type="GO" id="GO:0007218">
    <property type="term" value="P:neuropeptide signaling pathway"/>
    <property type="evidence" value="ECO:0007669"/>
    <property type="project" value="UniProtKB-KW"/>
</dbReference>
<dbReference type="InterPro" id="IPR013231">
    <property type="entry name" value="Periviscerokinin"/>
</dbReference>
<dbReference type="Pfam" id="PF08259">
    <property type="entry name" value="Periviscerokin"/>
    <property type="match status" value="1"/>
</dbReference>
<evidence type="ECO:0000255" key="1"/>
<evidence type="ECO:0000269" key="2">
    <source>
    </source>
</evidence>
<evidence type="ECO:0000305" key="3"/>
<reference evidence="3" key="1">
    <citation type="journal article" date="2005" name="Peptides">
        <title>Peptidomics of neurohemal organs from species of the cockroach family Blattidae: how do neuropeptides of closely related species differ?</title>
        <authorList>
            <person name="Predel R."/>
            <person name="Gaede G."/>
        </authorList>
    </citation>
    <scope>PROTEIN SEQUENCE</scope>
    <scope>SUBCELLULAR LOCATION</scope>
    <scope>TISSUE SPECIFICITY</scope>
    <scope>MASS SPECTROMETRY</scope>
    <scope>AMIDATION AT VAL-11</scope>
    <source>
        <tissue evidence="2">Abdominal perisympathetic organs</tissue>
    </source>
</reference>
<comment type="function">
    <text evidence="3">Mediates visceral muscle contractile activity (myotropic activity).</text>
</comment>
<comment type="subcellular location">
    <subcellularLocation>
        <location evidence="2">Secreted</location>
    </subcellularLocation>
</comment>
<comment type="tissue specificity">
    <text evidence="2">Abdominal perisympathetic organs.</text>
</comment>
<comment type="mass spectrometry" mass="1070.6" method="MALDI" evidence="2"/>
<comment type="similarity">
    <text evidence="1">Belongs to the periviscerokinin family.</text>
</comment>
<organism>
    <name type="scientific">Celatoblatta sp. (strain Blue Mountains)</name>
    <name type="common">Cockroach</name>
    <dbReference type="NCBI Taxonomy" id="303880"/>
    <lineage>
        <taxon>Eukaryota</taxon>
        <taxon>Metazoa</taxon>
        <taxon>Ecdysozoa</taxon>
        <taxon>Arthropoda</taxon>
        <taxon>Hexapoda</taxon>
        <taxon>Insecta</taxon>
        <taxon>Pterygota</taxon>
        <taxon>Neoptera</taxon>
        <taxon>Polyneoptera</taxon>
        <taxon>Dictyoptera</taxon>
        <taxon>Blattodea</taxon>
        <taxon>Blattoidea</taxon>
        <taxon>Blattidae</taxon>
        <taxon>Blattinae</taxon>
        <taxon>Celatoblatta</taxon>
    </lineage>
</organism>
<protein>
    <recommendedName>
        <fullName>Periviscerokinin-2 type 2</fullName>
        <shortName>PVK-2 type 2</shortName>
    </recommendedName>
</protein>
<accession>P84373</accession>
<sequence length="11" mass="1071">GSSGLISVPRV</sequence>
<feature type="peptide" id="PRO_0000044260" description="Periviscerokinin-2 type 2">
    <location>
        <begin position="1"/>
        <end position="11"/>
    </location>
</feature>
<feature type="modified residue" description="Valine amide" evidence="2">
    <location>
        <position position="11"/>
    </location>
</feature>
<proteinExistence type="evidence at protein level"/>